<reference key="1">
    <citation type="journal article" date="2000" name="Nature">
        <title>Genome sequence of the endocellular bacterial symbiont of aphids Buchnera sp. APS.</title>
        <authorList>
            <person name="Shigenobu S."/>
            <person name="Watanabe H."/>
            <person name="Hattori M."/>
            <person name="Sakaki Y."/>
            <person name="Ishikawa H."/>
        </authorList>
    </citation>
    <scope>NUCLEOTIDE SEQUENCE [LARGE SCALE GENOMIC DNA]</scope>
    <source>
        <strain>APS</strain>
    </source>
</reference>
<evidence type="ECO:0000255" key="1">
    <source>
        <dbReference type="HAMAP-Rule" id="MF_00197"/>
    </source>
</evidence>
<evidence type="ECO:0000305" key="2"/>
<name>DAPF_BUCAI</name>
<proteinExistence type="inferred from homology"/>
<dbReference type="EC" id="5.1.1.7" evidence="1"/>
<dbReference type="EMBL" id="BA000003">
    <property type="protein sequence ID" value="BAB13278.1"/>
    <property type="status" value="ALT_INIT"/>
    <property type="molecule type" value="Genomic_DNA"/>
</dbReference>
<dbReference type="RefSeq" id="NP_240392.2">
    <property type="nucleotide sequence ID" value="NC_002528.1"/>
</dbReference>
<dbReference type="SMR" id="P57649"/>
<dbReference type="STRING" id="563178.BUAP5A_582"/>
<dbReference type="EnsemblBacteria" id="BAB13278">
    <property type="protein sequence ID" value="BAB13278"/>
    <property type="gene ID" value="BAB13278"/>
</dbReference>
<dbReference type="KEGG" id="buc:BU589"/>
<dbReference type="PATRIC" id="fig|107806.10.peg.594"/>
<dbReference type="eggNOG" id="COG0253">
    <property type="taxonomic scope" value="Bacteria"/>
</dbReference>
<dbReference type="HOGENOM" id="CLU_053306_1_1_6"/>
<dbReference type="UniPathway" id="UPA00034">
    <property type="reaction ID" value="UER00025"/>
</dbReference>
<dbReference type="Proteomes" id="UP000001806">
    <property type="component" value="Chromosome"/>
</dbReference>
<dbReference type="GO" id="GO:0005829">
    <property type="term" value="C:cytosol"/>
    <property type="evidence" value="ECO:0007669"/>
    <property type="project" value="TreeGrafter"/>
</dbReference>
<dbReference type="GO" id="GO:0008837">
    <property type="term" value="F:diaminopimelate epimerase activity"/>
    <property type="evidence" value="ECO:0007669"/>
    <property type="project" value="UniProtKB-UniRule"/>
</dbReference>
<dbReference type="GO" id="GO:0009089">
    <property type="term" value="P:lysine biosynthetic process via diaminopimelate"/>
    <property type="evidence" value="ECO:0007669"/>
    <property type="project" value="UniProtKB-UniRule"/>
</dbReference>
<dbReference type="FunFam" id="3.10.310.10:FF:000001">
    <property type="entry name" value="Diaminopimelate epimerase"/>
    <property type="match status" value="1"/>
</dbReference>
<dbReference type="Gene3D" id="3.10.310.10">
    <property type="entry name" value="Diaminopimelate Epimerase, Chain A, domain 1"/>
    <property type="match status" value="2"/>
</dbReference>
<dbReference type="HAMAP" id="MF_00197">
    <property type="entry name" value="DAP_epimerase"/>
    <property type="match status" value="1"/>
</dbReference>
<dbReference type="InterPro" id="IPR018510">
    <property type="entry name" value="DAP_epimerase_AS"/>
</dbReference>
<dbReference type="InterPro" id="IPR001653">
    <property type="entry name" value="DAP_epimerase_DapF"/>
</dbReference>
<dbReference type="NCBIfam" id="TIGR00652">
    <property type="entry name" value="DapF"/>
    <property type="match status" value="1"/>
</dbReference>
<dbReference type="PANTHER" id="PTHR31689:SF0">
    <property type="entry name" value="DIAMINOPIMELATE EPIMERASE"/>
    <property type="match status" value="1"/>
</dbReference>
<dbReference type="PANTHER" id="PTHR31689">
    <property type="entry name" value="DIAMINOPIMELATE EPIMERASE, CHLOROPLASTIC"/>
    <property type="match status" value="1"/>
</dbReference>
<dbReference type="Pfam" id="PF01678">
    <property type="entry name" value="DAP_epimerase"/>
    <property type="match status" value="2"/>
</dbReference>
<dbReference type="SUPFAM" id="SSF54506">
    <property type="entry name" value="Diaminopimelate epimerase-like"/>
    <property type="match status" value="2"/>
</dbReference>
<dbReference type="PROSITE" id="PS01326">
    <property type="entry name" value="DAP_EPIMERASE"/>
    <property type="match status" value="1"/>
</dbReference>
<protein>
    <recommendedName>
        <fullName evidence="1">Diaminopimelate epimerase</fullName>
        <shortName evidence="1">DAP epimerase</shortName>
        <ecNumber evidence="1">5.1.1.7</ecNumber>
    </recommendedName>
    <alternativeName>
        <fullName evidence="1">PLP-independent amino acid racemase</fullName>
    </alternativeName>
</protein>
<feature type="chain" id="PRO_0000149825" description="Diaminopimelate epimerase">
    <location>
        <begin position="1"/>
        <end position="284"/>
    </location>
</feature>
<feature type="active site" description="Proton donor" evidence="1">
    <location>
        <position position="83"/>
    </location>
</feature>
<feature type="active site" description="Proton acceptor" evidence="1">
    <location>
        <position position="227"/>
    </location>
</feature>
<feature type="binding site" evidence="1">
    <location>
        <position position="21"/>
    </location>
    <ligand>
        <name>substrate</name>
    </ligand>
</feature>
<feature type="binding site" evidence="1">
    <location>
        <position position="54"/>
    </location>
    <ligand>
        <name>substrate</name>
    </ligand>
</feature>
<feature type="binding site" evidence="1">
    <location>
        <position position="74"/>
    </location>
    <ligand>
        <name>substrate</name>
    </ligand>
</feature>
<feature type="binding site" evidence="1">
    <location>
        <begin position="84"/>
        <end position="85"/>
    </location>
    <ligand>
        <name>substrate</name>
    </ligand>
</feature>
<feature type="binding site" evidence="1">
    <location>
        <position position="167"/>
    </location>
    <ligand>
        <name>substrate</name>
    </ligand>
</feature>
<feature type="binding site" evidence="1">
    <location>
        <position position="200"/>
    </location>
    <ligand>
        <name>substrate</name>
    </ligand>
</feature>
<feature type="binding site" evidence="1">
    <location>
        <begin position="218"/>
        <end position="219"/>
    </location>
    <ligand>
        <name>substrate</name>
    </ligand>
</feature>
<feature type="binding site" evidence="1">
    <location>
        <begin position="228"/>
        <end position="229"/>
    </location>
    <ligand>
        <name>substrate</name>
    </ligand>
</feature>
<feature type="site" description="Could be important to modulate the pK values of the two catalytic cysteine residues" evidence="1">
    <location>
        <position position="169"/>
    </location>
</feature>
<feature type="site" description="Could be important to modulate the pK values of the two catalytic cysteine residues" evidence="1">
    <location>
        <position position="218"/>
    </location>
</feature>
<feature type="site" description="Important for dimerization" evidence="1">
    <location>
        <position position="278"/>
    </location>
</feature>
<gene>
    <name evidence="1" type="primary">dapF</name>
    <name type="ordered locus">BU589</name>
</gene>
<organism>
    <name type="scientific">Buchnera aphidicola subsp. Acyrthosiphon pisum (strain APS)</name>
    <name type="common">Acyrthosiphon pisum symbiotic bacterium</name>
    <dbReference type="NCBI Taxonomy" id="107806"/>
    <lineage>
        <taxon>Bacteria</taxon>
        <taxon>Pseudomonadati</taxon>
        <taxon>Pseudomonadota</taxon>
        <taxon>Gammaproteobacteria</taxon>
        <taxon>Enterobacterales</taxon>
        <taxon>Erwiniaceae</taxon>
        <taxon>Buchnera</taxon>
    </lineage>
</organism>
<comment type="function">
    <text evidence="1">Catalyzes the stereoinversion of LL-2,6-diaminopimelate (L,L-DAP) to meso-diaminopimelate (meso-DAP), a precursor of L-lysine and an essential component of the bacterial peptidoglycan.</text>
</comment>
<comment type="catalytic activity">
    <reaction evidence="1">
        <text>(2S,6S)-2,6-diaminopimelate = meso-2,6-diaminopimelate</text>
        <dbReference type="Rhea" id="RHEA:15393"/>
        <dbReference type="ChEBI" id="CHEBI:57609"/>
        <dbReference type="ChEBI" id="CHEBI:57791"/>
        <dbReference type="EC" id="5.1.1.7"/>
    </reaction>
</comment>
<comment type="pathway">
    <text evidence="1">Amino-acid biosynthesis; L-lysine biosynthesis via DAP pathway; DL-2,6-diaminopimelate from LL-2,6-diaminopimelate: step 1/1.</text>
</comment>
<comment type="subunit">
    <text evidence="1">Homodimer.</text>
</comment>
<comment type="subcellular location">
    <subcellularLocation>
        <location evidence="1">Cytoplasm</location>
    </subcellularLocation>
</comment>
<comment type="similarity">
    <text evidence="1">Belongs to the diaminopimelate epimerase family.</text>
</comment>
<comment type="sequence caution" evidence="2">
    <conflict type="erroneous initiation">
        <sequence resource="EMBL-CDS" id="BAB13278"/>
    </conflict>
    <text>Extended N-terminus.</text>
</comment>
<keyword id="KW-0028">Amino-acid biosynthesis</keyword>
<keyword id="KW-0963">Cytoplasm</keyword>
<keyword id="KW-0413">Isomerase</keyword>
<keyword id="KW-0457">Lysine biosynthesis</keyword>
<keyword id="KW-1185">Reference proteome</keyword>
<sequence>MDSYYKNKKKINFSKMHGLKNDFMVINCIKKNVFLTSHIIKKLSNRYTGIGFDQLLLVEKSNSLLTDFHYRIFNANGNEVEQCGNGARCFGLFLLLKGLTNKKKILISTKKKPLTIEFLTENMIKVNMNEPDFKFYNLSSLQNVLDNNFSIKLMNENLICNLVSIGNPHCIIKVQSVKNAPVNIIGDSIEKNPIFPEGVNVSFMEILNKKHIKLRVYERNVGETKACGSAACAAVAVGIAQKLLSDTVHVELLGGKLIIIWKGFGTPLYMVGPAKHVYDGYIYI</sequence>
<accession>P57649</accession>